<feature type="chain" id="PRO_0000071238" description="Uncharacterized protein L182">
    <location>
        <begin position="1"/>
        <end position="389"/>
    </location>
</feature>
<gene>
    <name type="ordered locus">MIMI_L182</name>
</gene>
<protein>
    <recommendedName>
        <fullName>Uncharacterized protein L182</fullName>
    </recommendedName>
</protein>
<proteinExistence type="inferred from homology"/>
<keyword id="KW-1185">Reference proteome</keyword>
<name>YL182_MIMIV</name>
<organism>
    <name type="scientific">Acanthamoeba polyphaga mimivirus</name>
    <name type="common">APMV</name>
    <dbReference type="NCBI Taxonomy" id="212035"/>
    <lineage>
        <taxon>Viruses</taxon>
        <taxon>Varidnaviria</taxon>
        <taxon>Bamfordvirae</taxon>
        <taxon>Nucleocytoviricota</taxon>
        <taxon>Megaviricetes</taxon>
        <taxon>Imitervirales</taxon>
        <taxon>Mimiviridae</taxon>
        <taxon>Megamimivirinae</taxon>
        <taxon>Mimivirus</taxon>
        <taxon>Mimivirus bradfordmassiliense</taxon>
    </lineage>
</organism>
<accession>Q5UPP4</accession>
<evidence type="ECO:0000305" key="1"/>
<comment type="similarity">
    <text evidence="1">Belongs to the mimivirus L17x/L18x family.</text>
</comment>
<dbReference type="EMBL" id="AY653733">
    <property type="protein sequence ID" value="AAV50456.1"/>
    <property type="molecule type" value="Genomic_DNA"/>
</dbReference>
<dbReference type="KEGG" id="vg:9924784"/>
<dbReference type="Proteomes" id="UP000001134">
    <property type="component" value="Genome"/>
</dbReference>
<organismHost>
    <name type="scientific">Acanthamoeba polyphaga</name>
    <name type="common">Amoeba</name>
    <dbReference type="NCBI Taxonomy" id="5757"/>
</organismHost>
<reference key="1">
    <citation type="journal article" date="2004" name="Science">
        <title>The 1.2-megabase genome sequence of Mimivirus.</title>
        <authorList>
            <person name="Raoult D."/>
            <person name="Audic S."/>
            <person name="Robert C."/>
            <person name="Abergel C."/>
            <person name="Renesto P."/>
            <person name="Ogata H."/>
            <person name="La Scola B."/>
            <person name="Susan M."/>
            <person name="Claverie J.-M."/>
        </authorList>
    </citation>
    <scope>NUCLEOTIDE SEQUENCE [LARGE SCALE GENOMIC DNA]</scope>
    <source>
        <strain>Rowbotham-Bradford</strain>
    </source>
</reference>
<sequence>MCNFVFCFGSHNKKLLSDRIKSSKKGWYLYLGKKYRIGIKIITLSGRKYISVNFNKSIEFMKFLVRKNIHCNIFDQSHKCKSHNHYKNYLRYIIDNKCMDHIKIFYGKFFPLIRSQGRINNIIDIAKPLVLFENYTVDMDLGIDQETIMCIFKYGKMIDMASLLIHVLCTISDVTIEFLDDMLSIYRHKIIKLLTKEKHELDNDFNIMPMDVFLIPSFRNDDVDMFYFVVEEMFKLHDYIDTGNLTERELNVFNIFVYKLNADTINATINTHLIGLNHIHDFLVFYCPKIFNQLVLKLNDETSLNESIIFDILQLDFIEYMITVCETIGNNNPKILNKFLRYAKSTEMAQLLIDYDADYEKLYKSSKFHECNDCVKHFIENLVEETIDT</sequence>